<accession>Q7VF76</accession>
<name>SYDND_HELHP</name>
<comment type="function">
    <text evidence="1">Aspartyl-tRNA synthetase with relaxed tRNA specificity since it is able to aspartylate not only its cognate tRNA(Asp) but also tRNA(Asn). Reaction proceeds in two steps: L-aspartate is first activated by ATP to form Asp-AMP and then transferred to the acceptor end of tRNA(Asp/Asn).</text>
</comment>
<comment type="catalytic activity">
    <reaction evidence="1">
        <text>tRNA(Asx) + L-aspartate + ATP = L-aspartyl-tRNA(Asx) + AMP + diphosphate</text>
        <dbReference type="Rhea" id="RHEA:18349"/>
        <dbReference type="Rhea" id="RHEA-COMP:9710"/>
        <dbReference type="Rhea" id="RHEA-COMP:9711"/>
        <dbReference type="ChEBI" id="CHEBI:29991"/>
        <dbReference type="ChEBI" id="CHEBI:30616"/>
        <dbReference type="ChEBI" id="CHEBI:33019"/>
        <dbReference type="ChEBI" id="CHEBI:78442"/>
        <dbReference type="ChEBI" id="CHEBI:78516"/>
        <dbReference type="ChEBI" id="CHEBI:456215"/>
        <dbReference type="EC" id="6.1.1.23"/>
    </reaction>
</comment>
<comment type="subunit">
    <text evidence="1">Homodimer.</text>
</comment>
<comment type="subcellular location">
    <subcellularLocation>
        <location evidence="1">Cytoplasm</location>
    </subcellularLocation>
</comment>
<comment type="similarity">
    <text evidence="1">Belongs to the class-II aminoacyl-tRNA synthetase family. Type 1 subfamily.</text>
</comment>
<gene>
    <name evidence="1" type="primary">aspS</name>
    <name type="ordered locus">HH_1801</name>
</gene>
<keyword id="KW-0030">Aminoacyl-tRNA synthetase</keyword>
<keyword id="KW-0067">ATP-binding</keyword>
<keyword id="KW-0963">Cytoplasm</keyword>
<keyword id="KW-0436">Ligase</keyword>
<keyword id="KW-0547">Nucleotide-binding</keyword>
<keyword id="KW-0648">Protein biosynthesis</keyword>
<keyword id="KW-1185">Reference proteome</keyword>
<protein>
    <recommendedName>
        <fullName evidence="1">Aspartate--tRNA(Asp/Asn) ligase</fullName>
        <ecNumber evidence="1">6.1.1.23</ecNumber>
    </recommendedName>
    <alternativeName>
        <fullName evidence="1">Aspartyl-tRNA synthetase</fullName>
        <shortName evidence="1">AspRS</shortName>
    </alternativeName>
    <alternativeName>
        <fullName evidence="1">Non-discriminating aspartyl-tRNA synthetase</fullName>
        <shortName evidence="1">ND-AspRS</shortName>
    </alternativeName>
</protein>
<feature type="chain" id="PRO_0000110882" description="Aspartate--tRNA(Asp/Asn) ligase">
    <location>
        <begin position="1"/>
        <end position="581"/>
    </location>
</feature>
<feature type="region of interest" description="Aspartate" evidence="1">
    <location>
        <begin position="196"/>
        <end position="199"/>
    </location>
</feature>
<feature type="binding site" evidence="1">
    <location>
        <position position="172"/>
    </location>
    <ligand>
        <name>L-aspartate</name>
        <dbReference type="ChEBI" id="CHEBI:29991"/>
    </ligand>
</feature>
<feature type="binding site" evidence="1">
    <location>
        <begin position="218"/>
        <end position="220"/>
    </location>
    <ligand>
        <name>ATP</name>
        <dbReference type="ChEBI" id="CHEBI:30616"/>
    </ligand>
</feature>
<feature type="binding site" evidence="1">
    <location>
        <position position="218"/>
    </location>
    <ligand>
        <name>L-aspartate</name>
        <dbReference type="ChEBI" id="CHEBI:29991"/>
    </ligand>
</feature>
<feature type="binding site" evidence="1">
    <location>
        <position position="227"/>
    </location>
    <ligand>
        <name>ATP</name>
        <dbReference type="ChEBI" id="CHEBI:30616"/>
    </ligand>
</feature>
<feature type="binding site" evidence="1">
    <location>
        <position position="445"/>
    </location>
    <ligand>
        <name>L-aspartate</name>
        <dbReference type="ChEBI" id="CHEBI:29991"/>
    </ligand>
</feature>
<feature type="binding site" evidence="1">
    <location>
        <position position="475"/>
    </location>
    <ligand>
        <name>ATP</name>
        <dbReference type="ChEBI" id="CHEBI:30616"/>
    </ligand>
</feature>
<feature type="binding site" evidence="1">
    <location>
        <position position="482"/>
    </location>
    <ligand>
        <name>L-aspartate</name>
        <dbReference type="ChEBI" id="CHEBI:29991"/>
    </ligand>
</feature>
<feature type="binding site" evidence="1">
    <location>
        <begin position="527"/>
        <end position="530"/>
    </location>
    <ligand>
        <name>ATP</name>
        <dbReference type="ChEBI" id="CHEBI:30616"/>
    </ligand>
</feature>
<feature type="site" description="Important for tRNA non-discrimination" evidence="1">
    <location>
        <position position="31"/>
    </location>
</feature>
<feature type="site" description="Important for tRNA non-discrimination" evidence="1">
    <location>
        <position position="81"/>
    </location>
</feature>
<dbReference type="EC" id="6.1.1.23" evidence="1"/>
<dbReference type="EMBL" id="AE017125">
    <property type="protein sequence ID" value="AAP78398.1"/>
    <property type="molecule type" value="Genomic_DNA"/>
</dbReference>
<dbReference type="RefSeq" id="WP_011116640.1">
    <property type="nucleotide sequence ID" value="NC_004917.1"/>
</dbReference>
<dbReference type="SMR" id="Q7VF76"/>
<dbReference type="STRING" id="235279.HH_1801"/>
<dbReference type="KEGG" id="hhe:HH_1801"/>
<dbReference type="eggNOG" id="COG0173">
    <property type="taxonomic scope" value="Bacteria"/>
</dbReference>
<dbReference type="HOGENOM" id="CLU_014330_3_2_7"/>
<dbReference type="OrthoDB" id="9802326at2"/>
<dbReference type="Proteomes" id="UP000002495">
    <property type="component" value="Chromosome"/>
</dbReference>
<dbReference type="GO" id="GO:0005737">
    <property type="term" value="C:cytoplasm"/>
    <property type="evidence" value="ECO:0007669"/>
    <property type="project" value="UniProtKB-SubCell"/>
</dbReference>
<dbReference type="GO" id="GO:0004815">
    <property type="term" value="F:aspartate-tRNA ligase activity"/>
    <property type="evidence" value="ECO:0007669"/>
    <property type="project" value="UniProtKB-UniRule"/>
</dbReference>
<dbReference type="GO" id="GO:0050560">
    <property type="term" value="F:aspartate-tRNA(Asn) ligase activity"/>
    <property type="evidence" value="ECO:0007669"/>
    <property type="project" value="UniProtKB-EC"/>
</dbReference>
<dbReference type="GO" id="GO:0005524">
    <property type="term" value="F:ATP binding"/>
    <property type="evidence" value="ECO:0007669"/>
    <property type="project" value="UniProtKB-UniRule"/>
</dbReference>
<dbReference type="GO" id="GO:0003676">
    <property type="term" value="F:nucleic acid binding"/>
    <property type="evidence" value="ECO:0007669"/>
    <property type="project" value="InterPro"/>
</dbReference>
<dbReference type="GO" id="GO:0006422">
    <property type="term" value="P:aspartyl-tRNA aminoacylation"/>
    <property type="evidence" value="ECO:0007669"/>
    <property type="project" value="UniProtKB-UniRule"/>
</dbReference>
<dbReference type="CDD" id="cd00777">
    <property type="entry name" value="AspRS_core"/>
    <property type="match status" value="1"/>
</dbReference>
<dbReference type="CDD" id="cd04317">
    <property type="entry name" value="EcAspRS_like_N"/>
    <property type="match status" value="1"/>
</dbReference>
<dbReference type="Gene3D" id="3.30.930.10">
    <property type="entry name" value="Bira Bifunctional Protein, Domain 2"/>
    <property type="match status" value="1"/>
</dbReference>
<dbReference type="Gene3D" id="3.30.1360.30">
    <property type="entry name" value="GAD-like domain"/>
    <property type="match status" value="1"/>
</dbReference>
<dbReference type="Gene3D" id="2.40.50.140">
    <property type="entry name" value="Nucleic acid-binding proteins"/>
    <property type="match status" value="1"/>
</dbReference>
<dbReference type="HAMAP" id="MF_00044">
    <property type="entry name" value="Asp_tRNA_synth_type1"/>
    <property type="match status" value="1"/>
</dbReference>
<dbReference type="InterPro" id="IPR004364">
    <property type="entry name" value="Aa-tRNA-synt_II"/>
</dbReference>
<dbReference type="InterPro" id="IPR006195">
    <property type="entry name" value="aa-tRNA-synth_II"/>
</dbReference>
<dbReference type="InterPro" id="IPR045864">
    <property type="entry name" value="aa-tRNA-synth_II/BPL/LPL"/>
</dbReference>
<dbReference type="InterPro" id="IPR004524">
    <property type="entry name" value="Asp-tRNA-ligase_1"/>
</dbReference>
<dbReference type="InterPro" id="IPR047089">
    <property type="entry name" value="Asp-tRNA-ligase_1_N"/>
</dbReference>
<dbReference type="InterPro" id="IPR002312">
    <property type="entry name" value="Asp/Asn-tRNA-synth_IIb"/>
</dbReference>
<dbReference type="InterPro" id="IPR047090">
    <property type="entry name" value="AspRS_core"/>
</dbReference>
<dbReference type="InterPro" id="IPR004115">
    <property type="entry name" value="GAD-like_sf"/>
</dbReference>
<dbReference type="InterPro" id="IPR029351">
    <property type="entry name" value="GAD_dom"/>
</dbReference>
<dbReference type="InterPro" id="IPR012340">
    <property type="entry name" value="NA-bd_OB-fold"/>
</dbReference>
<dbReference type="InterPro" id="IPR004365">
    <property type="entry name" value="NA-bd_OB_tRNA"/>
</dbReference>
<dbReference type="NCBIfam" id="TIGR00459">
    <property type="entry name" value="aspS_bact"/>
    <property type="match status" value="1"/>
</dbReference>
<dbReference type="NCBIfam" id="NF001750">
    <property type="entry name" value="PRK00476.1"/>
    <property type="match status" value="1"/>
</dbReference>
<dbReference type="PANTHER" id="PTHR22594:SF5">
    <property type="entry name" value="ASPARTATE--TRNA LIGASE, MITOCHONDRIAL"/>
    <property type="match status" value="1"/>
</dbReference>
<dbReference type="PANTHER" id="PTHR22594">
    <property type="entry name" value="ASPARTYL/LYSYL-TRNA SYNTHETASE"/>
    <property type="match status" value="1"/>
</dbReference>
<dbReference type="Pfam" id="PF02938">
    <property type="entry name" value="GAD"/>
    <property type="match status" value="1"/>
</dbReference>
<dbReference type="Pfam" id="PF00152">
    <property type="entry name" value="tRNA-synt_2"/>
    <property type="match status" value="1"/>
</dbReference>
<dbReference type="Pfam" id="PF01336">
    <property type="entry name" value="tRNA_anti-codon"/>
    <property type="match status" value="1"/>
</dbReference>
<dbReference type="PRINTS" id="PR01042">
    <property type="entry name" value="TRNASYNTHASP"/>
</dbReference>
<dbReference type="SUPFAM" id="SSF55681">
    <property type="entry name" value="Class II aaRS and biotin synthetases"/>
    <property type="match status" value="1"/>
</dbReference>
<dbReference type="SUPFAM" id="SSF55261">
    <property type="entry name" value="GAD domain-like"/>
    <property type="match status" value="1"/>
</dbReference>
<dbReference type="SUPFAM" id="SSF50249">
    <property type="entry name" value="Nucleic acid-binding proteins"/>
    <property type="match status" value="1"/>
</dbReference>
<dbReference type="PROSITE" id="PS50862">
    <property type="entry name" value="AA_TRNA_LIGASE_II"/>
    <property type="match status" value="1"/>
</dbReference>
<organism>
    <name type="scientific">Helicobacter hepaticus (strain ATCC 51449 / 3B1)</name>
    <dbReference type="NCBI Taxonomy" id="235279"/>
    <lineage>
        <taxon>Bacteria</taxon>
        <taxon>Pseudomonadati</taxon>
        <taxon>Campylobacterota</taxon>
        <taxon>Epsilonproteobacteria</taxon>
        <taxon>Campylobacterales</taxon>
        <taxon>Helicobacteraceae</taxon>
        <taxon>Helicobacter</taxon>
    </lineage>
</organism>
<evidence type="ECO:0000255" key="1">
    <source>
        <dbReference type="HAMAP-Rule" id="MF_00044"/>
    </source>
</evidence>
<proteinExistence type="inferred from homology"/>
<reference key="1">
    <citation type="journal article" date="2003" name="Proc. Natl. Acad. Sci. U.S.A.">
        <title>The complete genome sequence of the carcinogenic bacterium Helicobacter hepaticus.</title>
        <authorList>
            <person name="Suerbaum S."/>
            <person name="Josenhans C."/>
            <person name="Sterzenbach T."/>
            <person name="Drescher B."/>
            <person name="Brandt P."/>
            <person name="Bell M."/>
            <person name="Droege M."/>
            <person name="Fartmann B."/>
            <person name="Fischer H.-P."/>
            <person name="Ge Z."/>
            <person name="Hoerster A."/>
            <person name="Holland R."/>
            <person name="Klein K."/>
            <person name="Koenig J."/>
            <person name="Macko L."/>
            <person name="Mendz G.L."/>
            <person name="Nyakatura G."/>
            <person name="Schauer D.B."/>
            <person name="Shen Z."/>
            <person name="Weber J."/>
            <person name="Frosch M."/>
            <person name="Fox J.G."/>
        </authorList>
    </citation>
    <scope>NUCLEOTIDE SEQUENCE [LARGE SCALE GENOMIC DNA]</scope>
    <source>
        <strain>ATCC 51449 / 3B1</strain>
    </source>
</reference>
<sequence length="581" mass="65326">MLRTHLCAELGEEHIGTEVQVCGWCNTYRDHGGVVFIDLRDKSGIVQLVCDPSTQAHAIASSVRDEYVLVAKGKVRARGAGLENPKLKTGMIEIVLNSLIIENKSPTPPIAIGDESVNEELRLKYRYLDLRSPKAYNIFKIRSDAAIATRNSLQKMGFLEVETPILTKATPEGARDYLVPSRVHQGEFYALPQSPQLFKQLLMMSGFDKYFQIAKCFRDEDLRADRQPEFTQIDIEMSFCEQEDIISVAENLLKDIFSACGTEIEIPFMRLPYAQAMESYGSDKPDLRFCMPLVEVGDLFVDSSNAIFKNIAQDSKNNRIKALCVKGGDTFFSRKTLGEAEDFVRKFGAKGLAYIQIKENELKGPLVKFISESALNELVSRVKAEVGDIIFFGAGAKKIVWDYMGRLRLKVAEDMKLINENEYKFLWVVDFPMFEKDEGKTKALHHPFTMPNDLDKEDIEEITSVAYDVVLNGIELGGGSIRIHKDSIQKRVFELLGISTQEAEDKFGFLLEALSFGAPPHGGIAIGFDRLIMLLSKSQSIRDVIAFPKTQRATCPLTLAPSKVNDEQLKELHIRVKNELK</sequence>